<comment type="function">
    <text evidence="1">Peptide chain release factor 2 directs the termination of translation in response to the peptide chain termination codons UGA and UAA.</text>
</comment>
<comment type="subcellular location">
    <subcellularLocation>
        <location evidence="1">Cytoplasm</location>
    </subcellularLocation>
</comment>
<comment type="PTM">
    <text evidence="1">Methylated by PrmC. Methylation increases the termination efficiency of RF2.</text>
</comment>
<comment type="similarity">
    <text evidence="1">Belongs to the prokaryotic/mitochondrial release factor family.</text>
</comment>
<dbReference type="EMBL" id="AM747720">
    <property type="protein sequence ID" value="CAR52490.1"/>
    <property type="molecule type" value="Genomic_DNA"/>
</dbReference>
<dbReference type="SMR" id="B4EDB1"/>
<dbReference type="KEGG" id="bcj:BCAL2189"/>
<dbReference type="eggNOG" id="COG1186">
    <property type="taxonomic scope" value="Bacteria"/>
</dbReference>
<dbReference type="HOGENOM" id="CLU_220733_0_0_4"/>
<dbReference type="Proteomes" id="UP000001035">
    <property type="component" value="Chromosome 1"/>
</dbReference>
<dbReference type="GO" id="GO:0005737">
    <property type="term" value="C:cytoplasm"/>
    <property type="evidence" value="ECO:0007669"/>
    <property type="project" value="UniProtKB-SubCell"/>
</dbReference>
<dbReference type="GO" id="GO:0016149">
    <property type="term" value="F:translation release factor activity, codon specific"/>
    <property type="evidence" value="ECO:0007669"/>
    <property type="project" value="UniProtKB-UniRule"/>
</dbReference>
<dbReference type="FunFam" id="3.30.160.20:FF:000010">
    <property type="entry name" value="Peptide chain release factor 2"/>
    <property type="match status" value="1"/>
</dbReference>
<dbReference type="Gene3D" id="3.30.160.20">
    <property type="match status" value="1"/>
</dbReference>
<dbReference type="Gene3D" id="3.30.70.1660">
    <property type="match status" value="1"/>
</dbReference>
<dbReference type="Gene3D" id="1.20.58.410">
    <property type="entry name" value="Release factor"/>
    <property type="match status" value="1"/>
</dbReference>
<dbReference type="HAMAP" id="MF_00094">
    <property type="entry name" value="Rel_fac_2"/>
    <property type="match status" value="1"/>
</dbReference>
<dbReference type="InterPro" id="IPR005139">
    <property type="entry name" value="PCRF"/>
</dbReference>
<dbReference type="InterPro" id="IPR000352">
    <property type="entry name" value="Pep_chain_release_fac_I"/>
</dbReference>
<dbReference type="InterPro" id="IPR045853">
    <property type="entry name" value="Pep_chain_release_fac_I_sf"/>
</dbReference>
<dbReference type="InterPro" id="IPR004374">
    <property type="entry name" value="PrfB"/>
</dbReference>
<dbReference type="NCBIfam" id="TIGR00020">
    <property type="entry name" value="prfB"/>
    <property type="match status" value="1"/>
</dbReference>
<dbReference type="PANTHER" id="PTHR43116:SF3">
    <property type="entry name" value="CLASS I PEPTIDE CHAIN RELEASE FACTOR"/>
    <property type="match status" value="1"/>
</dbReference>
<dbReference type="PANTHER" id="PTHR43116">
    <property type="entry name" value="PEPTIDE CHAIN RELEASE FACTOR 2"/>
    <property type="match status" value="1"/>
</dbReference>
<dbReference type="Pfam" id="PF03462">
    <property type="entry name" value="PCRF"/>
    <property type="match status" value="1"/>
</dbReference>
<dbReference type="Pfam" id="PF00472">
    <property type="entry name" value="RF-1"/>
    <property type="match status" value="1"/>
</dbReference>
<dbReference type="SMART" id="SM00937">
    <property type="entry name" value="PCRF"/>
    <property type="match status" value="1"/>
</dbReference>
<dbReference type="SUPFAM" id="SSF75620">
    <property type="entry name" value="Release factor"/>
    <property type="match status" value="1"/>
</dbReference>
<dbReference type="PROSITE" id="PS00745">
    <property type="entry name" value="RF_PROK_I"/>
    <property type="match status" value="1"/>
</dbReference>
<feature type="chain" id="PRO_1000093533" description="Peptide chain release factor 2">
    <location>
        <begin position="1"/>
        <end position="367"/>
    </location>
</feature>
<feature type="modified residue" description="N5-methylglutamine" evidence="1">
    <location>
        <position position="254"/>
    </location>
</feature>
<keyword id="KW-0963">Cytoplasm</keyword>
<keyword id="KW-0488">Methylation</keyword>
<keyword id="KW-0648">Protein biosynthesis</keyword>
<reference key="1">
    <citation type="journal article" date="2009" name="J. Bacteriol.">
        <title>The genome of Burkholderia cenocepacia J2315, an epidemic pathogen of cystic fibrosis patients.</title>
        <authorList>
            <person name="Holden M.T."/>
            <person name="Seth-Smith H.M."/>
            <person name="Crossman L.C."/>
            <person name="Sebaihia M."/>
            <person name="Bentley S.D."/>
            <person name="Cerdeno-Tarraga A.M."/>
            <person name="Thomson N.R."/>
            <person name="Bason N."/>
            <person name="Quail M.A."/>
            <person name="Sharp S."/>
            <person name="Cherevach I."/>
            <person name="Churcher C."/>
            <person name="Goodhead I."/>
            <person name="Hauser H."/>
            <person name="Holroyd N."/>
            <person name="Mungall K."/>
            <person name="Scott P."/>
            <person name="Walker D."/>
            <person name="White B."/>
            <person name="Rose H."/>
            <person name="Iversen P."/>
            <person name="Mil-Homens D."/>
            <person name="Rocha E.P."/>
            <person name="Fialho A.M."/>
            <person name="Baldwin A."/>
            <person name="Dowson C."/>
            <person name="Barrell B.G."/>
            <person name="Govan J.R."/>
            <person name="Vandamme P."/>
            <person name="Hart C.A."/>
            <person name="Mahenthiralingam E."/>
            <person name="Parkhill J."/>
        </authorList>
    </citation>
    <scope>NUCLEOTIDE SEQUENCE [LARGE SCALE GENOMIC DNA]</scope>
    <source>
        <strain>ATCC BAA-245 / DSM 16553 / LMG 16656 / NCTC 13227 / J2315 / CF5610</strain>
    </source>
</reference>
<name>RF2_BURCJ</name>
<protein>
    <recommendedName>
        <fullName evidence="1">Peptide chain release factor 2</fullName>
        <shortName evidence="1">RF-2</shortName>
    </recommendedName>
</protein>
<organism>
    <name type="scientific">Burkholderia cenocepacia (strain ATCC BAA-245 / DSM 16553 / LMG 16656 / NCTC 13227 / J2315 / CF5610)</name>
    <name type="common">Burkholderia cepacia (strain J2315)</name>
    <dbReference type="NCBI Taxonomy" id="216591"/>
    <lineage>
        <taxon>Bacteria</taxon>
        <taxon>Pseudomonadati</taxon>
        <taxon>Pseudomonadota</taxon>
        <taxon>Betaproteobacteria</taxon>
        <taxon>Burkholderiales</taxon>
        <taxon>Burkholderiaceae</taxon>
        <taxon>Burkholderia</taxon>
        <taxon>Burkholderia cepacia complex</taxon>
    </lineage>
</organism>
<accession>B4EDB1</accession>
<evidence type="ECO:0000255" key="1">
    <source>
        <dbReference type="HAMAP-Rule" id="MF_00094"/>
    </source>
</evidence>
<gene>
    <name evidence="1" type="primary">prfB</name>
    <name type="ordered locus">BceJ2315_21520</name>
    <name type="ORF">BCAL2189</name>
</gene>
<proteinExistence type="inferred from homology"/>
<sequence length="367" mass="41081">MEAERLNAIESSLLDLRNRAGELRGYLDYDAKAARLTEVNKELEDPNVWNDSKNAQALGREKKLLEGVVTTLTALDSDLRDALDLFELAREEGDEDTLLASEEDAAKLEARVGDIEFRRMFSNPADPNNCFIDIQAGAGGTEACDWASMLLRQYLRYCERKGFKAEVLEESDGDVAGIKNATVKVTGEYAYGFLRTETGIHRLVRKSPFDSSGGRHTSFSSVFVYPEIDDSIEVEINPADLRIDTYRASGAGGQHINKTDSAVRITHMPTGIVVQCQNDRSQHRNRAEAMAMLKSRLYEVEMRKRQAEQDKLESSKTDVGWGHQIRSYVLDQSRVKDLRTNVEMSNTRAVLDGDLDDFISASLKQGV</sequence>